<feature type="chain" id="PRO_0000299842" description="Uncharacterized protein YDL009C">
    <location>
        <begin position="1"/>
        <end position="107"/>
    </location>
</feature>
<feature type="transmembrane region" description="Helical" evidence="1">
    <location>
        <begin position="52"/>
        <end position="72"/>
    </location>
</feature>
<proteinExistence type="predicted"/>
<protein>
    <recommendedName>
        <fullName>Uncharacterized protein YDL009C</fullName>
    </recommendedName>
</protein>
<organism>
    <name type="scientific">Saccharomyces cerevisiae (strain ATCC 204508 / S288c)</name>
    <name type="common">Baker's yeast</name>
    <dbReference type="NCBI Taxonomy" id="559292"/>
    <lineage>
        <taxon>Eukaryota</taxon>
        <taxon>Fungi</taxon>
        <taxon>Dikarya</taxon>
        <taxon>Ascomycota</taxon>
        <taxon>Saccharomycotina</taxon>
        <taxon>Saccharomycetes</taxon>
        <taxon>Saccharomycetales</taxon>
        <taxon>Saccharomycetaceae</taxon>
        <taxon>Saccharomyces</taxon>
    </lineage>
</organism>
<accession>Q12210</accession>
<accession>I2HB55</accession>
<keyword id="KW-0472">Membrane</keyword>
<keyword id="KW-1185">Reference proteome</keyword>
<keyword id="KW-0812">Transmembrane</keyword>
<keyword id="KW-1133">Transmembrane helix</keyword>
<name>YD009_YEAST</name>
<dbReference type="EMBL" id="Z48432">
    <property type="protein sequence ID" value="CAA88350.1"/>
    <property type="molecule type" value="Genomic_DNA"/>
</dbReference>
<dbReference type="EMBL" id="Z74059">
    <property type="protein sequence ID" value="CAA98568.1"/>
    <property type="molecule type" value="Genomic_DNA"/>
</dbReference>
<dbReference type="EMBL" id="BK006938">
    <property type="protein sequence ID" value="DAA35099.1"/>
    <property type="molecule type" value="Genomic_DNA"/>
</dbReference>
<dbReference type="PIR" id="S52510">
    <property type="entry name" value="S52510"/>
</dbReference>
<dbReference type="RefSeq" id="NP_001257671.1">
    <property type="nucleotide sequence ID" value="NM_001270742.1"/>
</dbReference>
<dbReference type="SMR" id="Q12210"/>
<dbReference type="BioGRID" id="300470">
    <property type="interactions" value="3"/>
</dbReference>
<dbReference type="FunCoup" id="Q12210">
    <property type="interactions" value="17"/>
</dbReference>
<dbReference type="IntAct" id="Q12210">
    <property type="interactions" value="1"/>
</dbReference>
<dbReference type="STRING" id="4932.YDL009C"/>
<dbReference type="PaxDb" id="4932-YDL009C"/>
<dbReference type="EnsemblFungi" id="YDL009C_mRNA">
    <property type="protein sequence ID" value="YDL009C"/>
    <property type="gene ID" value="YDL009C"/>
</dbReference>
<dbReference type="GeneID" id="851553"/>
<dbReference type="KEGG" id="sce:YDL009C"/>
<dbReference type="AGR" id="SGD:S000002167"/>
<dbReference type="SGD" id="S000002167">
    <property type="gene designation" value="YDL009C"/>
</dbReference>
<dbReference type="VEuPathDB" id="FungiDB:YDL009C"/>
<dbReference type="HOGENOM" id="CLU_2212030_0_0_1"/>
<dbReference type="InParanoid" id="Q12210"/>
<dbReference type="OrthoDB" id="10401697at2759"/>
<dbReference type="BioCyc" id="YEAST:G3O-29440-MONOMER"/>
<dbReference type="BioGRID-ORCS" id="851553">
    <property type="hits" value="1 hit in 10 CRISPR screens"/>
</dbReference>
<dbReference type="PRO" id="PR:Q12210"/>
<dbReference type="Proteomes" id="UP000002311">
    <property type="component" value="Chromosome IV"/>
</dbReference>
<dbReference type="RNAct" id="Q12210">
    <property type="molecule type" value="protein"/>
</dbReference>
<dbReference type="GO" id="GO:0005829">
    <property type="term" value="C:cytosol"/>
    <property type="evidence" value="ECO:0007005"/>
    <property type="project" value="SGD"/>
</dbReference>
<dbReference type="GO" id="GO:0016020">
    <property type="term" value="C:membrane"/>
    <property type="evidence" value="ECO:0007669"/>
    <property type="project" value="UniProtKB-SubCell"/>
</dbReference>
<comment type="subcellular location">
    <subcellularLocation>
        <location evidence="2">Membrane</location>
        <topology evidence="2">Single-pass membrane protein</topology>
    </subcellularLocation>
</comment>
<gene>
    <name type="ordered locus">YDL009C</name>
</gene>
<evidence type="ECO:0000255" key="1"/>
<evidence type="ECO:0000305" key="2"/>
<sequence length="107" mass="12725">MKALSVLCFHNPFKRCLGQKSFFVGDSFFIPTPKRLVLGKLRLSNYTAFHDLIIHDLFIYIFILNFFFFPFCNNFNYWKVFHVAQPRIYHHSRLVMILKVSLECAVS</sequence>
<reference key="1">
    <citation type="journal article" date="1997" name="Nature">
        <title>The nucleotide sequence of Saccharomyces cerevisiae chromosome IV.</title>
        <authorList>
            <person name="Jacq C."/>
            <person name="Alt-Moerbe J."/>
            <person name="Andre B."/>
            <person name="Arnold W."/>
            <person name="Bahr A."/>
            <person name="Ballesta J.P.G."/>
            <person name="Bargues M."/>
            <person name="Baron L."/>
            <person name="Becker A."/>
            <person name="Biteau N."/>
            <person name="Bloecker H."/>
            <person name="Blugeon C."/>
            <person name="Boskovic J."/>
            <person name="Brandt P."/>
            <person name="Brueckner M."/>
            <person name="Buitrago M.J."/>
            <person name="Coster F."/>
            <person name="Delaveau T."/>
            <person name="del Rey F."/>
            <person name="Dujon B."/>
            <person name="Eide L.G."/>
            <person name="Garcia-Cantalejo J.M."/>
            <person name="Goffeau A."/>
            <person name="Gomez-Peris A."/>
            <person name="Granotier C."/>
            <person name="Hanemann V."/>
            <person name="Hankeln T."/>
            <person name="Hoheisel J.D."/>
            <person name="Jaeger W."/>
            <person name="Jimenez A."/>
            <person name="Jonniaux J.-L."/>
            <person name="Kraemer C."/>
            <person name="Kuester H."/>
            <person name="Laamanen P."/>
            <person name="Legros Y."/>
            <person name="Louis E.J."/>
            <person name="Moeller-Rieker S."/>
            <person name="Monnet A."/>
            <person name="Moro M."/>
            <person name="Mueller-Auer S."/>
            <person name="Nussbaumer B."/>
            <person name="Paricio N."/>
            <person name="Paulin L."/>
            <person name="Perea J."/>
            <person name="Perez-Alonso M."/>
            <person name="Perez-Ortin J.E."/>
            <person name="Pohl T.M."/>
            <person name="Prydz H."/>
            <person name="Purnelle B."/>
            <person name="Rasmussen S.W."/>
            <person name="Remacha M.A."/>
            <person name="Revuelta J.L."/>
            <person name="Rieger M."/>
            <person name="Salom D."/>
            <person name="Saluz H.P."/>
            <person name="Saiz J.E."/>
            <person name="Saren A.-M."/>
            <person name="Schaefer M."/>
            <person name="Scharfe M."/>
            <person name="Schmidt E.R."/>
            <person name="Schneider C."/>
            <person name="Scholler P."/>
            <person name="Schwarz S."/>
            <person name="Soler-Mira A."/>
            <person name="Urrestarazu L.A."/>
            <person name="Verhasselt P."/>
            <person name="Vissers S."/>
            <person name="Voet M."/>
            <person name="Volckaert G."/>
            <person name="Wagner G."/>
            <person name="Wambutt R."/>
            <person name="Wedler E."/>
            <person name="Wedler H."/>
            <person name="Woelfl S."/>
            <person name="Harris D.E."/>
            <person name="Bowman S."/>
            <person name="Brown D."/>
            <person name="Churcher C.M."/>
            <person name="Connor R."/>
            <person name="Dedman K."/>
            <person name="Gentles S."/>
            <person name="Hamlin N."/>
            <person name="Hunt S."/>
            <person name="Jones L."/>
            <person name="McDonald S."/>
            <person name="Murphy L.D."/>
            <person name="Niblett D."/>
            <person name="Odell C."/>
            <person name="Oliver K."/>
            <person name="Rajandream M.A."/>
            <person name="Richards C."/>
            <person name="Shore L."/>
            <person name="Walsh S.V."/>
            <person name="Barrell B.G."/>
            <person name="Dietrich F.S."/>
            <person name="Mulligan J.T."/>
            <person name="Allen E."/>
            <person name="Araujo R."/>
            <person name="Aviles E."/>
            <person name="Berno A."/>
            <person name="Carpenter J."/>
            <person name="Chen E."/>
            <person name="Cherry J.M."/>
            <person name="Chung E."/>
            <person name="Duncan M."/>
            <person name="Hunicke-Smith S."/>
            <person name="Hyman R.W."/>
            <person name="Komp C."/>
            <person name="Lashkari D."/>
            <person name="Lew H."/>
            <person name="Lin D."/>
            <person name="Mosedale D."/>
            <person name="Nakahara K."/>
            <person name="Namath A."/>
            <person name="Oefner P."/>
            <person name="Oh C."/>
            <person name="Petel F.X."/>
            <person name="Roberts D."/>
            <person name="Schramm S."/>
            <person name="Schroeder M."/>
            <person name="Shogren T."/>
            <person name="Shroff N."/>
            <person name="Winant A."/>
            <person name="Yelton M.A."/>
            <person name="Botstein D."/>
            <person name="Davis R.W."/>
            <person name="Johnston M."/>
            <person name="Andrews S."/>
            <person name="Brinkman R."/>
            <person name="Cooper J."/>
            <person name="Ding H."/>
            <person name="Du Z."/>
            <person name="Favello A."/>
            <person name="Fulton L."/>
            <person name="Gattung S."/>
            <person name="Greco T."/>
            <person name="Hallsworth K."/>
            <person name="Hawkins J."/>
            <person name="Hillier L.W."/>
            <person name="Jier M."/>
            <person name="Johnson D."/>
            <person name="Johnston L."/>
            <person name="Kirsten J."/>
            <person name="Kucaba T."/>
            <person name="Langston Y."/>
            <person name="Latreille P."/>
            <person name="Le T."/>
            <person name="Mardis E."/>
            <person name="Menezes S."/>
            <person name="Miller N."/>
            <person name="Nhan M."/>
            <person name="Pauley A."/>
            <person name="Peluso D."/>
            <person name="Rifkin L."/>
            <person name="Riles L."/>
            <person name="Taich A."/>
            <person name="Trevaskis E."/>
            <person name="Vignati D."/>
            <person name="Wilcox L."/>
            <person name="Wohldman P."/>
            <person name="Vaudin M."/>
            <person name="Wilson R."/>
            <person name="Waterston R."/>
            <person name="Albermann K."/>
            <person name="Hani J."/>
            <person name="Heumann K."/>
            <person name="Kleine K."/>
            <person name="Mewes H.-W."/>
            <person name="Zollner A."/>
            <person name="Zaccaria P."/>
        </authorList>
    </citation>
    <scope>NUCLEOTIDE SEQUENCE [LARGE SCALE GENOMIC DNA]</scope>
    <source>
        <strain>ATCC 204508 / S288c</strain>
    </source>
</reference>
<reference key="2">
    <citation type="journal article" date="2014" name="G3 (Bethesda)">
        <title>The reference genome sequence of Saccharomyces cerevisiae: Then and now.</title>
        <authorList>
            <person name="Engel S.R."/>
            <person name="Dietrich F.S."/>
            <person name="Fisk D.G."/>
            <person name="Binkley G."/>
            <person name="Balakrishnan R."/>
            <person name="Costanzo M.C."/>
            <person name="Dwight S.S."/>
            <person name="Hitz B.C."/>
            <person name="Karra K."/>
            <person name="Nash R.S."/>
            <person name="Weng S."/>
            <person name="Wong E.D."/>
            <person name="Lloyd P."/>
            <person name="Skrzypek M.S."/>
            <person name="Miyasato S.R."/>
            <person name="Simison M."/>
            <person name="Cherry J.M."/>
        </authorList>
    </citation>
    <scope>GENOME REANNOTATION</scope>
    <source>
        <strain>ATCC 204508 / S288c</strain>
    </source>
</reference>
<reference key="3">
    <citation type="journal article" date="2012" name="Science">
        <title>High-resolution view of the yeast meiotic program revealed by ribosome profiling.</title>
        <authorList>
            <person name="Brar G.A."/>
            <person name="Yassour M."/>
            <person name="Friedman N."/>
            <person name="Regev A."/>
            <person name="Ingolia N.T."/>
            <person name="Weissman J.S."/>
        </authorList>
    </citation>
    <scope>IDENTIFICATION</scope>
</reference>